<organism>
    <name type="scientific">Thermococcus kodakarensis (strain ATCC BAA-918 / JCM 12380 / KOD1)</name>
    <name type="common">Pyrococcus kodakaraensis (strain KOD1)</name>
    <dbReference type="NCBI Taxonomy" id="69014"/>
    <lineage>
        <taxon>Archaea</taxon>
        <taxon>Methanobacteriati</taxon>
        <taxon>Methanobacteriota</taxon>
        <taxon>Thermococci</taxon>
        <taxon>Thermococcales</taxon>
        <taxon>Thermococcaceae</taxon>
        <taxon>Thermococcus</taxon>
    </lineage>
</organism>
<feature type="chain" id="PRO_0000127060" description="Large ribosomal subunit protein eL39">
    <location>
        <begin position="1"/>
        <end position="51"/>
    </location>
</feature>
<name>RL39_THEKO</name>
<dbReference type="EMBL" id="AP006878">
    <property type="protein sequence ID" value="BAD85508.1"/>
    <property type="molecule type" value="Genomic_DNA"/>
</dbReference>
<dbReference type="RefSeq" id="WP_011250270.1">
    <property type="nucleotide sequence ID" value="NC_006624.1"/>
</dbReference>
<dbReference type="PDB" id="6SKF">
    <property type="method" value="EM"/>
    <property type="resolution" value="2.95 A"/>
    <property type="chains" value="Bi=1-51"/>
</dbReference>
<dbReference type="PDB" id="6SKG">
    <property type="method" value="EM"/>
    <property type="resolution" value="2.65 A"/>
    <property type="chains" value="Bi=1-51"/>
</dbReference>
<dbReference type="PDB" id="6TH6">
    <property type="method" value="EM"/>
    <property type="resolution" value="2.55 A"/>
    <property type="chains" value="Bi=1-51"/>
</dbReference>
<dbReference type="PDBsum" id="6SKF"/>
<dbReference type="PDBsum" id="6SKG"/>
<dbReference type="PDBsum" id="6TH6"/>
<dbReference type="EMDB" id="EMD-10223"/>
<dbReference type="EMDB" id="EMD-10224"/>
<dbReference type="EMDB" id="EMD-10503"/>
<dbReference type="SMR" id="Q5JGT6"/>
<dbReference type="FunCoup" id="Q5JGT6">
    <property type="interactions" value="85"/>
</dbReference>
<dbReference type="STRING" id="69014.TK1319"/>
<dbReference type="EnsemblBacteria" id="BAD85508">
    <property type="protein sequence ID" value="BAD85508"/>
    <property type="gene ID" value="TK1319"/>
</dbReference>
<dbReference type="GeneID" id="78447839"/>
<dbReference type="KEGG" id="tko:TK1319"/>
<dbReference type="PATRIC" id="fig|69014.16.peg.1291"/>
<dbReference type="eggNOG" id="arCOG04177">
    <property type="taxonomic scope" value="Archaea"/>
</dbReference>
<dbReference type="HOGENOM" id="CLU_181948_4_0_2"/>
<dbReference type="InParanoid" id="Q5JGT6"/>
<dbReference type="OrthoDB" id="65887at2157"/>
<dbReference type="PhylomeDB" id="Q5JGT6"/>
<dbReference type="Proteomes" id="UP000000536">
    <property type="component" value="Chromosome"/>
</dbReference>
<dbReference type="GO" id="GO:0022625">
    <property type="term" value="C:cytosolic large ribosomal subunit"/>
    <property type="evidence" value="ECO:0000318"/>
    <property type="project" value="GO_Central"/>
</dbReference>
<dbReference type="GO" id="GO:0003735">
    <property type="term" value="F:structural constituent of ribosome"/>
    <property type="evidence" value="ECO:0007669"/>
    <property type="project" value="InterPro"/>
</dbReference>
<dbReference type="GO" id="GO:0006412">
    <property type="term" value="P:translation"/>
    <property type="evidence" value="ECO:0007669"/>
    <property type="project" value="UniProtKB-UniRule"/>
</dbReference>
<dbReference type="FunFam" id="1.10.1620.10:FF:000001">
    <property type="entry name" value="60S ribosomal protein-like L39"/>
    <property type="match status" value="1"/>
</dbReference>
<dbReference type="Gene3D" id="1.10.1620.10">
    <property type="entry name" value="Ribosomal protein L39e"/>
    <property type="match status" value="1"/>
</dbReference>
<dbReference type="HAMAP" id="MF_00629">
    <property type="entry name" value="Ribosomal_eL39"/>
    <property type="match status" value="1"/>
</dbReference>
<dbReference type="InterPro" id="IPR000077">
    <property type="entry name" value="Ribosomal_eL39"/>
</dbReference>
<dbReference type="InterPro" id="IPR020083">
    <property type="entry name" value="Ribosomal_eL39_CS"/>
</dbReference>
<dbReference type="InterPro" id="IPR023626">
    <property type="entry name" value="Ribosomal_eL39_dom_sf"/>
</dbReference>
<dbReference type="NCBIfam" id="NF002316">
    <property type="entry name" value="PRK01242.1"/>
    <property type="match status" value="1"/>
</dbReference>
<dbReference type="PANTHER" id="PTHR19970:SF0">
    <property type="entry name" value="LARGE RIBOSOMAL SUBUNIT PROTEIN EL39"/>
    <property type="match status" value="1"/>
</dbReference>
<dbReference type="PANTHER" id="PTHR19970">
    <property type="entry name" value="RIBOSOMAL PROTEIN L39E"/>
    <property type="match status" value="1"/>
</dbReference>
<dbReference type="Pfam" id="PF00832">
    <property type="entry name" value="Ribosomal_L39"/>
    <property type="match status" value="1"/>
</dbReference>
<dbReference type="SUPFAM" id="SSF48662">
    <property type="entry name" value="Ribosomal protein L39e"/>
    <property type="match status" value="1"/>
</dbReference>
<dbReference type="PROSITE" id="PS00051">
    <property type="entry name" value="RIBOSOMAL_L39E"/>
    <property type="match status" value="1"/>
</dbReference>
<protein>
    <recommendedName>
        <fullName evidence="1">Large ribosomal subunit protein eL39</fullName>
    </recommendedName>
    <alternativeName>
        <fullName evidence="3">50S ribosomal protein L39e</fullName>
    </alternativeName>
</protein>
<accession>Q5JGT6</accession>
<keyword id="KW-0002">3D-structure</keyword>
<keyword id="KW-1185">Reference proteome</keyword>
<keyword id="KW-0687">Ribonucleoprotein</keyword>
<keyword id="KW-0689">Ribosomal protein</keyword>
<comment type="subunit">
    <text evidence="2">Part of the 50S ribosomal subunit.</text>
</comment>
<comment type="similarity">
    <text evidence="1">Belongs to the eukaryotic ribosomal protein eL39 family.</text>
</comment>
<evidence type="ECO:0000255" key="1">
    <source>
        <dbReference type="HAMAP-Rule" id="MF_00629"/>
    </source>
</evidence>
<evidence type="ECO:0000269" key="2">
    <source>
    </source>
</evidence>
<evidence type="ECO:0000305" key="3"/>
<evidence type="ECO:0007744" key="4">
    <source>
        <dbReference type="PDB" id="6SKF"/>
    </source>
</evidence>
<evidence type="ECO:0007744" key="5">
    <source>
        <dbReference type="PDB" id="6SKG"/>
    </source>
</evidence>
<evidence type="ECO:0007744" key="6">
    <source>
        <dbReference type="PDB" id="6TH6"/>
    </source>
</evidence>
<sequence length="51" mass="6242">MARNKPFAKKLRLAKAAKQNRRVPVWVIVKTNRKVITHPKRRHWRRTKLKE</sequence>
<proteinExistence type="evidence at protein level"/>
<reference key="1">
    <citation type="journal article" date="2005" name="Genome Res.">
        <title>Complete genome sequence of the hyperthermophilic archaeon Thermococcus kodakaraensis KOD1 and comparison with Pyrococcus genomes.</title>
        <authorList>
            <person name="Fukui T."/>
            <person name="Atomi H."/>
            <person name="Kanai T."/>
            <person name="Matsumi R."/>
            <person name="Fujiwara S."/>
            <person name="Imanaka T."/>
        </authorList>
    </citation>
    <scope>NUCLEOTIDE SEQUENCE [LARGE SCALE GENOMIC DNA]</scope>
    <source>
        <strain>ATCC BAA-918 / JCM 12380 / KOD1</strain>
    </source>
</reference>
<reference evidence="4 5 6" key="2">
    <citation type="journal article" date="2020" name="Nature">
        <title>Dynamic RNA acetylation revealed by quantitative cross-evolutionary mapping.</title>
        <authorList>
            <person name="Sas-Chen A."/>
            <person name="Thomas J.M."/>
            <person name="Matzov D."/>
            <person name="Taoka M."/>
            <person name="Nance K.D."/>
            <person name="Nir R."/>
            <person name="Bryson K.M."/>
            <person name="Shachar R."/>
            <person name="Liman G.L.S."/>
            <person name="Burkhart B.W."/>
            <person name="Gamage S.T."/>
            <person name="Nobe Y."/>
            <person name="Briney C.A."/>
            <person name="Levy M.J."/>
            <person name="Fuchs R.T."/>
            <person name="Robb G.B."/>
            <person name="Hartmann J."/>
            <person name="Sharma S."/>
            <person name="Lin Q."/>
            <person name="Florens L."/>
            <person name="Washburn M.P."/>
            <person name="Isobe T."/>
            <person name="Santangelo T.J."/>
            <person name="Shalev-Benami M."/>
            <person name="Meier J.L."/>
            <person name="Schwartz S."/>
        </authorList>
    </citation>
    <scope>STRUCTURE BY ELECTRON MICROSCOPY (2.55 ANGSTROMS) IN 70S RIBOSOME</scope>
    <scope>SUBUNIT</scope>
    <source>
        <strain>ATCC BAA-918 / TS559</strain>
    </source>
</reference>
<gene>
    <name evidence="1" type="primary">rpl39e</name>
    <name type="ordered locus">TK1319</name>
</gene>